<accession>A0A7M4BDQ2</accession>
<evidence type="ECO:0000255" key="1">
    <source>
        <dbReference type="PROSITE-ProRule" id="PRU00227"/>
    </source>
</evidence>
<evidence type="ECO:0000256" key="2">
    <source>
        <dbReference type="SAM" id="MobiDB-lite"/>
    </source>
</evidence>
<evidence type="ECO:0000269" key="3">
    <source>
    </source>
</evidence>
<evidence type="ECO:0000303" key="4">
    <source>
    </source>
</evidence>
<proteinExistence type="inferred from homology"/>
<feature type="chain" id="PRO_0000454530" description="Transcription factor ffsR">
    <location>
        <begin position="1"/>
        <end position="612"/>
    </location>
</feature>
<feature type="DNA-binding region" description="Zn(2)-C6 fungal-type" evidence="1">
    <location>
        <begin position="28"/>
        <end position="60"/>
    </location>
</feature>
<feature type="region of interest" description="Disordered" evidence="2">
    <location>
        <begin position="1"/>
        <end position="21"/>
    </location>
</feature>
<feature type="region of interest" description="Disordered" evidence="2">
    <location>
        <begin position="73"/>
        <end position="130"/>
    </location>
</feature>
<feature type="region of interest" description="Disordered" evidence="2">
    <location>
        <begin position="154"/>
        <end position="249"/>
    </location>
</feature>
<feature type="region of interest" description="Disordered" evidence="2">
    <location>
        <begin position="451"/>
        <end position="470"/>
    </location>
</feature>
<feature type="compositionally biased region" description="Polar residues" evidence="2">
    <location>
        <begin position="1"/>
        <end position="12"/>
    </location>
</feature>
<feature type="compositionally biased region" description="Basic and acidic residues" evidence="2">
    <location>
        <begin position="73"/>
        <end position="82"/>
    </location>
</feature>
<feature type="compositionally biased region" description="Polar residues" evidence="2">
    <location>
        <begin position="92"/>
        <end position="103"/>
    </location>
</feature>
<feature type="compositionally biased region" description="Polar residues" evidence="2">
    <location>
        <begin position="154"/>
        <end position="169"/>
    </location>
</feature>
<feature type="compositionally biased region" description="Polar residues" evidence="2">
    <location>
        <begin position="238"/>
        <end position="249"/>
    </location>
</feature>
<feature type="compositionally biased region" description="Low complexity" evidence="2">
    <location>
        <begin position="458"/>
        <end position="470"/>
    </location>
</feature>
<sequence length="612" mass="65818">MDTLTAPTTQSEQPPPPLTASLSRRYACDRCRSHKLRCNRDLMTSTNSPCQRCRKARVKCTIGASIRVGLSPEELKNGENVHRASPGRSAGSHRTASTPSNHAPRSHGRTFTPESAHQAPPYPSNRSMSGSMRLSPVPWLDMISFDGAQELNFDGSTSGLPMGSHTNGSGPLHAPMGGSTSSNTSSTFLDVRPPLHTPASSKPQQEAWRTGDDSTDLRLLSQIPRTRGGGVTDPAAGLTQQHPAGVTSSAPLVSHDHAFAPPQTSIISEPIPGDDLPAGGRPPTWFPARSRAGSTPSPTELKDACIQKLSDLSASLMKDLDLIITCKTASSFLFTPSDKTAAGYLFKTLDGSMTEDNAVARMLYGSERFLDIIKLFNQLPSLPSSSLSMPAAAAAAAAAASYGSTRPVDSDDAYYYSDLEDTGDIRSRNPTPEDRGNEQWSILQAYLGRAGQGPPMGPSQGSSSRSTTTNCSSSFVEVQKPDVPSILVILSCYTCLLKIYETVFFVIQHVLECSPANPSGTTDIPHTVRDLNINGFFLQNHRTLQIKILIQVSTYMLDSIQKSLGTILSDSMFQALLKTLMKEEGCTITSQGEETGMQGVRDLIRRVEEMLA</sequence>
<gene>
    <name evidence="4" type="primary">ffsR</name>
</gene>
<reference key="1">
    <citation type="journal article" date="2020" name="J. Antibiot.">
        <title>Discovery and characterization of a cytochalasan biosynthetic cluster from the marine-derived fungus Aspergillus flavipes CNL-338.</title>
        <authorList>
            <person name="Heard S.C."/>
            <person name="Wu G."/>
            <person name="Winter J.M."/>
        </authorList>
    </citation>
    <scope>NUCLEOTIDE SEQUENCE [GENOMIC DNA]</scope>
    <scope>FUNCTION</scope>
    <source>
        <strain>CNL-338</strain>
    </source>
</reference>
<organism>
    <name type="scientific">Aspergillus flavipes</name>
    <dbReference type="NCBI Taxonomy" id="41900"/>
    <lineage>
        <taxon>Eukaryota</taxon>
        <taxon>Fungi</taxon>
        <taxon>Dikarya</taxon>
        <taxon>Ascomycota</taxon>
        <taxon>Pezizomycotina</taxon>
        <taxon>Eurotiomycetes</taxon>
        <taxon>Eurotiomycetidae</taxon>
        <taxon>Eurotiales</taxon>
        <taxon>Aspergillaceae</taxon>
        <taxon>Aspergillus</taxon>
        <taxon>Aspergillus subgen. Circumdati</taxon>
    </lineage>
</organism>
<name>FFSR_ASPFV</name>
<dbReference type="EMBL" id="MT586757">
    <property type="protein sequence ID" value="QOG08942.1"/>
    <property type="molecule type" value="Genomic_DNA"/>
</dbReference>
<dbReference type="GO" id="GO:0005634">
    <property type="term" value="C:nucleus"/>
    <property type="evidence" value="ECO:0007669"/>
    <property type="project" value="UniProtKB-SubCell"/>
</dbReference>
<dbReference type="GO" id="GO:0003677">
    <property type="term" value="F:DNA binding"/>
    <property type="evidence" value="ECO:0007669"/>
    <property type="project" value="UniProtKB-KW"/>
</dbReference>
<dbReference type="GO" id="GO:0000981">
    <property type="term" value="F:DNA-binding transcription factor activity, RNA polymerase II-specific"/>
    <property type="evidence" value="ECO:0007669"/>
    <property type="project" value="InterPro"/>
</dbReference>
<dbReference type="GO" id="GO:0008270">
    <property type="term" value="F:zinc ion binding"/>
    <property type="evidence" value="ECO:0007669"/>
    <property type="project" value="InterPro"/>
</dbReference>
<dbReference type="GO" id="GO:0009893">
    <property type="term" value="P:positive regulation of metabolic process"/>
    <property type="evidence" value="ECO:0007669"/>
    <property type="project" value="UniProtKB-ARBA"/>
</dbReference>
<dbReference type="CDD" id="cd00067">
    <property type="entry name" value="GAL4"/>
    <property type="match status" value="1"/>
</dbReference>
<dbReference type="Gene3D" id="4.10.240.10">
    <property type="entry name" value="Zn(2)-C6 fungal-type DNA-binding domain"/>
    <property type="match status" value="1"/>
</dbReference>
<dbReference type="InterPro" id="IPR036864">
    <property type="entry name" value="Zn2-C6_fun-type_DNA-bd_sf"/>
</dbReference>
<dbReference type="InterPro" id="IPR001138">
    <property type="entry name" value="Zn2Cys6_DnaBD"/>
</dbReference>
<dbReference type="Pfam" id="PF00172">
    <property type="entry name" value="Zn_clus"/>
    <property type="match status" value="1"/>
</dbReference>
<dbReference type="SMART" id="SM00066">
    <property type="entry name" value="GAL4"/>
    <property type="match status" value="1"/>
</dbReference>
<dbReference type="SUPFAM" id="SSF57701">
    <property type="entry name" value="Zn2/Cys6 DNA-binding domain"/>
    <property type="match status" value="1"/>
</dbReference>
<dbReference type="PROSITE" id="PS00463">
    <property type="entry name" value="ZN2_CY6_FUNGAL_1"/>
    <property type="match status" value="1"/>
</dbReference>
<dbReference type="PROSITE" id="PS50048">
    <property type="entry name" value="ZN2_CY6_FUNGAL_2"/>
    <property type="match status" value="1"/>
</dbReference>
<comment type="function">
    <text evidence="3">Transcription factor that specifically regulates the expression of the gene cluster that mediates the biosynthesis of the cytotoxic leucine-containing cytochalasans, including aspochalasin C, aspochalasin E, TMC-169, flavichalasine F, aspergillin PZ, aspochalasin M and flavichalasine G.</text>
</comment>
<comment type="subcellular location">
    <subcellularLocation>
        <location evidence="1">Nucleus</location>
    </subcellularLocation>
</comment>
<keyword id="KW-0238">DNA-binding</keyword>
<keyword id="KW-0539">Nucleus</keyword>
<keyword id="KW-0804">Transcription</keyword>
<keyword id="KW-0805">Transcription regulation</keyword>
<protein>
    <recommendedName>
        <fullName evidence="4">Transcription factor ffsR</fullName>
    </recommendedName>
    <alternativeName>
        <fullName evidence="4">Cytochalasans biosynthesis cluster protein ffsR</fullName>
    </alternativeName>
</protein>